<keyword id="KW-0067">ATP-binding</keyword>
<keyword id="KW-0997">Cell inner membrane</keyword>
<keyword id="KW-1003">Cell membrane</keyword>
<keyword id="KW-0472">Membrane</keyword>
<keyword id="KW-0547">Nucleotide-binding</keyword>
<keyword id="KW-0571">Peptide transport</keyword>
<keyword id="KW-0653">Protein transport</keyword>
<keyword id="KW-1185">Reference proteome</keyword>
<keyword id="KW-1278">Translocase</keyword>
<keyword id="KW-0813">Transport</keyword>
<gene>
    <name type="primary">dppD</name>
    <name type="ordered locus">HI_1185</name>
</gene>
<evidence type="ECO:0000250" key="1">
    <source>
        <dbReference type="UniProtKB" id="P0AAG0"/>
    </source>
</evidence>
<evidence type="ECO:0000255" key="2">
    <source>
        <dbReference type="PROSITE-ProRule" id="PRU00434"/>
    </source>
</evidence>
<evidence type="ECO:0000305" key="3"/>
<proteinExistence type="inferred from homology"/>
<accession>P45095</accession>
<feature type="chain" id="PRO_0000092315" description="Dipeptide transport ATP-binding protein DppD">
    <location>
        <begin position="1"/>
        <end position="330"/>
    </location>
</feature>
<feature type="domain" description="ABC transporter" evidence="2">
    <location>
        <begin position="6"/>
        <end position="254"/>
    </location>
</feature>
<feature type="binding site" evidence="2">
    <location>
        <begin position="40"/>
        <end position="47"/>
    </location>
    <ligand>
        <name>ATP</name>
        <dbReference type="ChEBI" id="CHEBI:30616"/>
    </ligand>
</feature>
<comment type="function">
    <text evidence="1">Part of the ABC transporter DppBCDF involved in dipeptide transport. Responsible for energy coupling to the transport system.</text>
</comment>
<comment type="catalytic activity">
    <reaction evidence="1">
        <text>a dipeptide(out) + ATP + H2O = a dipeptide(in) + ADP + phosphate + H(+)</text>
        <dbReference type="Rhea" id="RHEA:23120"/>
        <dbReference type="ChEBI" id="CHEBI:15377"/>
        <dbReference type="ChEBI" id="CHEBI:15378"/>
        <dbReference type="ChEBI" id="CHEBI:30616"/>
        <dbReference type="ChEBI" id="CHEBI:43474"/>
        <dbReference type="ChEBI" id="CHEBI:90799"/>
        <dbReference type="ChEBI" id="CHEBI:456216"/>
        <dbReference type="EC" id="7.4.2.9"/>
    </reaction>
</comment>
<comment type="subcellular location">
    <subcellularLocation>
        <location evidence="3">Cell inner membrane</location>
        <topology evidence="3">Peripheral membrane protein</topology>
    </subcellularLocation>
</comment>
<comment type="similarity">
    <text evidence="3">Belongs to the ABC transporter superfamily.</text>
</comment>
<protein>
    <recommendedName>
        <fullName evidence="1">Dipeptide transport ATP-binding protein DppD</fullName>
        <ecNumber evidence="1">7.4.2.9</ecNumber>
    </recommendedName>
</protein>
<dbReference type="EC" id="7.4.2.9" evidence="1"/>
<dbReference type="EMBL" id="L42023">
    <property type="protein sequence ID" value="AAC22838.1"/>
    <property type="molecule type" value="Genomic_DNA"/>
</dbReference>
<dbReference type="EMBL" id="U17295">
    <property type="protein sequence ID" value="AAA95974.1"/>
    <property type="molecule type" value="Genomic_DNA"/>
</dbReference>
<dbReference type="PIR" id="F64188">
    <property type="entry name" value="F64188"/>
</dbReference>
<dbReference type="RefSeq" id="NP_439341.1">
    <property type="nucleotide sequence ID" value="NC_000907.1"/>
</dbReference>
<dbReference type="SMR" id="P45095"/>
<dbReference type="STRING" id="71421.HI_1185"/>
<dbReference type="TCDB" id="3.A.1.5.27">
    <property type="family name" value="the atp-binding cassette (abc) superfamily"/>
</dbReference>
<dbReference type="EnsemblBacteria" id="AAC22838">
    <property type="protein sequence ID" value="AAC22838"/>
    <property type="gene ID" value="HI_1185"/>
</dbReference>
<dbReference type="KEGG" id="hin:HI_1185"/>
<dbReference type="PATRIC" id="fig|71421.8.peg.1236"/>
<dbReference type="eggNOG" id="COG0444">
    <property type="taxonomic scope" value="Bacteria"/>
</dbReference>
<dbReference type="HOGENOM" id="CLU_000604_1_23_6"/>
<dbReference type="OrthoDB" id="9784450at2"/>
<dbReference type="PhylomeDB" id="P45095"/>
<dbReference type="BioCyc" id="HINF71421:G1GJ1-1216-MONOMER"/>
<dbReference type="Proteomes" id="UP000000579">
    <property type="component" value="Chromosome"/>
</dbReference>
<dbReference type="GO" id="GO:0005886">
    <property type="term" value="C:plasma membrane"/>
    <property type="evidence" value="ECO:0007669"/>
    <property type="project" value="UniProtKB-SubCell"/>
</dbReference>
<dbReference type="GO" id="GO:0005524">
    <property type="term" value="F:ATP binding"/>
    <property type="evidence" value="ECO:0007669"/>
    <property type="project" value="UniProtKB-KW"/>
</dbReference>
<dbReference type="GO" id="GO:0016887">
    <property type="term" value="F:ATP hydrolysis activity"/>
    <property type="evidence" value="ECO:0007669"/>
    <property type="project" value="InterPro"/>
</dbReference>
<dbReference type="GO" id="GO:0015833">
    <property type="term" value="P:peptide transport"/>
    <property type="evidence" value="ECO:0007669"/>
    <property type="project" value="UniProtKB-KW"/>
</dbReference>
<dbReference type="GO" id="GO:0015031">
    <property type="term" value="P:protein transport"/>
    <property type="evidence" value="ECO:0007669"/>
    <property type="project" value="UniProtKB-KW"/>
</dbReference>
<dbReference type="CDD" id="cd03257">
    <property type="entry name" value="ABC_NikE_OppD_transporters"/>
    <property type="match status" value="1"/>
</dbReference>
<dbReference type="FunFam" id="3.40.50.300:FF:000016">
    <property type="entry name" value="Oligopeptide ABC transporter ATP-binding component"/>
    <property type="match status" value="1"/>
</dbReference>
<dbReference type="Gene3D" id="3.40.50.300">
    <property type="entry name" value="P-loop containing nucleotide triphosphate hydrolases"/>
    <property type="match status" value="1"/>
</dbReference>
<dbReference type="InterPro" id="IPR003593">
    <property type="entry name" value="AAA+_ATPase"/>
</dbReference>
<dbReference type="InterPro" id="IPR050388">
    <property type="entry name" value="ABC_Ni/Peptide_Import"/>
</dbReference>
<dbReference type="InterPro" id="IPR003439">
    <property type="entry name" value="ABC_transporter-like_ATP-bd"/>
</dbReference>
<dbReference type="InterPro" id="IPR017871">
    <property type="entry name" value="ABC_transporter-like_CS"/>
</dbReference>
<dbReference type="InterPro" id="IPR013563">
    <property type="entry name" value="Oligopep_ABC_C"/>
</dbReference>
<dbReference type="InterPro" id="IPR027417">
    <property type="entry name" value="P-loop_NTPase"/>
</dbReference>
<dbReference type="NCBIfam" id="TIGR01727">
    <property type="entry name" value="oligo_HPY"/>
    <property type="match status" value="1"/>
</dbReference>
<dbReference type="NCBIfam" id="NF008246">
    <property type="entry name" value="PRK11022.1"/>
    <property type="match status" value="1"/>
</dbReference>
<dbReference type="PANTHER" id="PTHR43297:SF2">
    <property type="entry name" value="DIPEPTIDE TRANSPORT ATP-BINDING PROTEIN DPPD"/>
    <property type="match status" value="1"/>
</dbReference>
<dbReference type="PANTHER" id="PTHR43297">
    <property type="entry name" value="OLIGOPEPTIDE TRANSPORT ATP-BINDING PROTEIN APPD"/>
    <property type="match status" value="1"/>
</dbReference>
<dbReference type="Pfam" id="PF00005">
    <property type="entry name" value="ABC_tran"/>
    <property type="match status" value="1"/>
</dbReference>
<dbReference type="Pfam" id="PF08352">
    <property type="entry name" value="oligo_HPY"/>
    <property type="match status" value="1"/>
</dbReference>
<dbReference type="SMART" id="SM00382">
    <property type="entry name" value="AAA"/>
    <property type="match status" value="1"/>
</dbReference>
<dbReference type="SUPFAM" id="SSF52540">
    <property type="entry name" value="P-loop containing nucleoside triphosphate hydrolases"/>
    <property type="match status" value="1"/>
</dbReference>
<dbReference type="PROSITE" id="PS00211">
    <property type="entry name" value="ABC_TRANSPORTER_1"/>
    <property type="match status" value="1"/>
</dbReference>
<dbReference type="PROSITE" id="PS50893">
    <property type="entry name" value="ABC_TRANSPORTER_2"/>
    <property type="match status" value="1"/>
</dbReference>
<reference key="1">
    <citation type="journal article" date="1995" name="Science">
        <title>Whole-genome random sequencing and assembly of Haemophilus influenzae Rd.</title>
        <authorList>
            <person name="Fleischmann R.D."/>
            <person name="Adams M.D."/>
            <person name="White O."/>
            <person name="Clayton R.A."/>
            <person name="Kirkness E.F."/>
            <person name="Kerlavage A.R."/>
            <person name="Bult C.J."/>
            <person name="Tomb J.-F."/>
            <person name="Dougherty B.A."/>
            <person name="Merrick J.M."/>
            <person name="McKenney K."/>
            <person name="Sutton G.G."/>
            <person name="FitzHugh W."/>
            <person name="Fields C.A."/>
            <person name="Gocayne J.D."/>
            <person name="Scott J.D."/>
            <person name="Shirley R."/>
            <person name="Liu L.-I."/>
            <person name="Glodek A."/>
            <person name="Kelley J.M."/>
            <person name="Weidman J.F."/>
            <person name="Phillips C.A."/>
            <person name="Spriggs T."/>
            <person name="Hedblom E."/>
            <person name="Cotton M.D."/>
            <person name="Utterback T.R."/>
            <person name="Hanna M.C."/>
            <person name="Nguyen D.T."/>
            <person name="Saudek D.M."/>
            <person name="Brandon R.C."/>
            <person name="Fine L.D."/>
            <person name="Fritchman J.L."/>
            <person name="Fuhrmann J.L."/>
            <person name="Geoghagen N.S.M."/>
            <person name="Gnehm C.L."/>
            <person name="McDonald L.A."/>
            <person name="Small K.V."/>
            <person name="Fraser C.M."/>
            <person name="Smith H.O."/>
            <person name="Venter J.C."/>
        </authorList>
    </citation>
    <scope>NUCLEOTIDE SEQUENCE [LARGE SCALE GENOMIC DNA]</scope>
    <source>
        <strain>ATCC 51907 / DSM 11121 / KW20 / Rd</strain>
    </source>
</reference>
<reference key="2">
    <citation type="journal article" date="1996" name="J. Bacteriol.">
        <title>Altered lipopolysaccharide characteristic of the I69 phenotype in Haemophilus influenzae results from mutations in a novel gene, isn.</title>
        <authorList>
            <person name="Preston A."/>
            <person name="Maskell D."/>
            <person name="Johnson A."/>
            <person name="Moxon E.R."/>
        </authorList>
    </citation>
    <scope>NUCLEOTIDE SEQUENCE [GENOMIC DNA]</scope>
    <source>
        <strain>ATCC 51907 / DSM 11121 / KW20 / Rd</strain>
    </source>
</reference>
<sequence>MALLDVKELSVHFGDKKTPFKAVDRISYQVAQGEVLGIVGESGSGKSVSSLAIMGLIDHPGRVSAESLQFENTDLLTLESKAKRQLIGADVAMIFQDPMTSLNPAYTVGFQIMEALKTHEGGTKKARKDRTLELLKLVGIPDPESRIDVYPHQLSGGMSQRVMIAMAIACRPKLLIADEPTTALDVTIQAQIMELLLELQKKECMSLILITHDLALVAEAAERIIVMYAGQIVEEGTAKDIFREPKHPYTQALLRSLPEFAEGKSRLESLQGVVPGKYDRPTGCLLNPRCPYATEYCRQVEPQLHHIGSRKVKCHTPLNEQGNPVEYQGA</sequence>
<name>DPPD_HAEIN</name>
<organism>
    <name type="scientific">Haemophilus influenzae (strain ATCC 51907 / DSM 11121 / KW20 / Rd)</name>
    <dbReference type="NCBI Taxonomy" id="71421"/>
    <lineage>
        <taxon>Bacteria</taxon>
        <taxon>Pseudomonadati</taxon>
        <taxon>Pseudomonadota</taxon>
        <taxon>Gammaproteobacteria</taxon>
        <taxon>Pasteurellales</taxon>
        <taxon>Pasteurellaceae</taxon>
        <taxon>Haemophilus</taxon>
    </lineage>
</organism>